<protein>
    <recommendedName>
        <fullName evidence="6">AP-4 complex subunit mu-1</fullName>
    </recommendedName>
</protein>
<comment type="function">
    <text evidence="1 5">Component of the adaptor protein complex 4 (AP-4). Adaptor protein complexes are vesicle coat components involved both in vesicle formation and cargo selection. They control the vesicular transport of proteins in different trafficking pathways. AP-4 forms a non clathrin-associated coat on vesicles departing the trans-Golgi network (TGN) and may be involved in the targeting of proteins from the trans-Golgi network (TGN) to the endosomal-lysosomal system (By similarity). It is also involved in protein sorting to the basolateral membrane in epithelial cells and the proper asymmetric localization of somatodendritic proteins in neurons (PubMed:11802162). Within AP-4, the mu-type subunit AP4M1 is directly involved in the recognition and binding of tyrosine-based sorting signals found in the cytoplasmic part of cargos. The adaptor protein complex 4 (AP-4) may also recognize other types of sorting signal (By similarity).</text>
</comment>
<comment type="subunit">
    <text evidence="1">Adaptor protein complex 4 (AP-4) is a heterotetramer composed of two large adaptins (epsilon-type subunit AP4E1 and beta-type subunit AP4B1), a medium adaptin (mu-type subunit AP4M1) and a small adaptin (sigma-type AP4S1). Interacts with tyrosine-based sorting signals on the cytoplasmic tail of cargo proteins such as APP, ATG9A, LAMP2 and NAGPA. Interacts with the C-terminal domain of GRID2. Interacts with GRIA1 and GRIA2; the interaction is indirect via CACNG3. Interacts with CACNG3; CACNG3 associates GRIA1 and GRIA2 with the adaptor protein complex 4 (AP-4) to target them to the somatodendritic compartment of neurons. Interacts with HOOK1 and HOOK2; the interactions are direct, mediate the interaction between FTS-Hook-FHIP (FHF) complex and AP-4 and the perinuclear distribution of AP-4 (By similarity).</text>
</comment>
<comment type="subcellular location">
    <subcellularLocation>
        <location evidence="5">Golgi apparatus</location>
        <location evidence="5">trans-Golgi network membrane</location>
        <topology evidence="6">Peripheral membrane protein</topology>
    </subcellularLocation>
    <subcellularLocation>
        <location evidence="5">Early endosome</location>
    </subcellularLocation>
    <text evidence="2">Found in soma and dendritic shafts of neuronal cells.</text>
</comment>
<comment type="similarity">
    <text evidence="3">Belongs to the adaptor complexes medium subunit family.</text>
</comment>
<evidence type="ECO:0000250" key="1">
    <source>
        <dbReference type="UniProtKB" id="O00189"/>
    </source>
</evidence>
<evidence type="ECO:0000250" key="2">
    <source>
        <dbReference type="UniProtKB" id="Q2PWT8"/>
    </source>
</evidence>
<evidence type="ECO:0000255" key="3"/>
<evidence type="ECO:0000255" key="4">
    <source>
        <dbReference type="PROSITE-ProRule" id="PRU00404"/>
    </source>
</evidence>
<evidence type="ECO:0000269" key="5">
    <source>
    </source>
</evidence>
<evidence type="ECO:0000305" key="6"/>
<sequence length="452" mass="49894">MISQFFILSSKGDPLIYKDFRGDSGGRDVAELFYRKLTGLPGDESPVVMHHDDRHFIHIRHSGLYLVATTSENISPFSLLELLSRLATLLGDYCGSLSEGTISRNVALVYELLDEVLDYGYVQTTSMEMLRNFIQTEAVVSKPFSLFDLSSVGLFGAETQQSKVAPSTAASRPVLASRSDQSQKNEVFLDVVERLSVLIASNGSLLKVDVQGEIRLKSFLPSGSEMRIGLTEEFCVGKSELRGYGPGIRVDEVSFHSSVLLEEFESHRILRLQPPQGELTVMRYQLSDDLPSPLPFRLFPSVQWDRGSGRLQVYLKLRCDLPPKSQALNVRLHLPLPRGVVSLSQELSGPEQKAELGEGALRWDLPRVQGGSQLSGLFQMDVPGLPGPPGQGHSATAPLGLGPASLSFELPRHTCSGLQVRFLRLAFRPCGSTSPHKWVRHLSHSDAYVIRI</sequence>
<dbReference type="EMBL" id="AAEX03004275">
    <property type="status" value="NOT_ANNOTATED_CDS"/>
    <property type="molecule type" value="Genomic_DNA"/>
</dbReference>
<dbReference type="RefSeq" id="XP_546965.2">
    <property type="nucleotide sequence ID" value="XM_546965.4"/>
</dbReference>
<dbReference type="SMR" id="E2RED8"/>
<dbReference type="FunCoup" id="E2RED8">
    <property type="interactions" value="1775"/>
</dbReference>
<dbReference type="STRING" id="9615.ENSCAFP00000045740"/>
<dbReference type="PaxDb" id="9612-ENSCAFP00000021690"/>
<dbReference type="eggNOG" id="KOG0937">
    <property type="taxonomic scope" value="Eukaryota"/>
</dbReference>
<dbReference type="HOGENOM" id="CLU_026996_5_0_1"/>
<dbReference type="InParanoid" id="E2RED8"/>
<dbReference type="OMA" id="DYGYIQN"/>
<dbReference type="OrthoDB" id="10259133at2759"/>
<dbReference type="TreeFam" id="TF329745"/>
<dbReference type="Proteomes" id="UP000002254">
    <property type="component" value="Unplaced"/>
</dbReference>
<dbReference type="Proteomes" id="UP000694429">
    <property type="component" value="Unplaced"/>
</dbReference>
<dbReference type="Proteomes" id="UP000694542">
    <property type="component" value="Unplaced"/>
</dbReference>
<dbReference type="Proteomes" id="UP000805418">
    <property type="component" value="Unplaced"/>
</dbReference>
<dbReference type="GO" id="GO:0030124">
    <property type="term" value="C:AP-4 adaptor complex"/>
    <property type="evidence" value="ECO:0000250"/>
    <property type="project" value="UniProtKB"/>
</dbReference>
<dbReference type="GO" id="GO:0030131">
    <property type="term" value="C:clathrin adaptor complex"/>
    <property type="evidence" value="ECO:0007669"/>
    <property type="project" value="InterPro"/>
</dbReference>
<dbReference type="GO" id="GO:0031410">
    <property type="term" value="C:cytoplasmic vesicle"/>
    <property type="evidence" value="ECO:0000318"/>
    <property type="project" value="GO_Central"/>
</dbReference>
<dbReference type="GO" id="GO:0005829">
    <property type="term" value="C:cytosol"/>
    <property type="evidence" value="ECO:0007669"/>
    <property type="project" value="GOC"/>
</dbReference>
<dbReference type="GO" id="GO:0005769">
    <property type="term" value="C:early endosome"/>
    <property type="evidence" value="ECO:0000314"/>
    <property type="project" value="UniProtKB"/>
</dbReference>
<dbReference type="GO" id="GO:0005802">
    <property type="term" value="C:trans-Golgi network"/>
    <property type="evidence" value="ECO:0000314"/>
    <property type="project" value="UniProtKB"/>
</dbReference>
<dbReference type="GO" id="GO:0000045">
    <property type="term" value="P:autophagosome assembly"/>
    <property type="evidence" value="ECO:0000250"/>
    <property type="project" value="UniProtKB"/>
</dbReference>
<dbReference type="GO" id="GO:0090160">
    <property type="term" value="P:Golgi to lysosome transport"/>
    <property type="evidence" value="ECO:0000250"/>
    <property type="project" value="UniProtKB"/>
</dbReference>
<dbReference type="GO" id="GO:0006886">
    <property type="term" value="P:intracellular protein transport"/>
    <property type="evidence" value="ECO:0007669"/>
    <property type="project" value="InterPro"/>
</dbReference>
<dbReference type="GO" id="GO:0008104">
    <property type="term" value="P:protein localization"/>
    <property type="evidence" value="ECO:0000250"/>
    <property type="project" value="UniProtKB"/>
</dbReference>
<dbReference type="GO" id="GO:1903361">
    <property type="term" value="P:protein localization to basolateral plasma membrane"/>
    <property type="evidence" value="ECO:0000315"/>
    <property type="project" value="UniProtKB"/>
</dbReference>
<dbReference type="GO" id="GO:0006605">
    <property type="term" value="P:protein targeting"/>
    <property type="evidence" value="ECO:0000314"/>
    <property type="project" value="UniProtKB"/>
</dbReference>
<dbReference type="CDD" id="cd09253">
    <property type="entry name" value="AP-4_Mu4_Cterm"/>
    <property type="match status" value="1"/>
</dbReference>
<dbReference type="CDD" id="cd14838">
    <property type="entry name" value="AP4_Mu_N"/>
    <property type="match status" value="1"/>
</dbReference>
<dbReference type="FunFam" id="2.60.40.1170:FF:000021">
    <property type="entry name" value="AP-4 complex subunit mu-1 isoform X1"/>
    <property type="match status" value="1"/>
</dbReference>
<dbReference type="FunFam" id="3.30.450.60:FF:000018">
    <property type="entry name" value="AP-4 complex subunit mu-1 isoform X1"/>
    <property type="match status" value="1"/>
</dbReference>
<dbReference type="Gene3D" id="3.30.450.60">
    <property type="match status" value="1"/>
</dbReference>
<dbReference type="Gene3D" id="2.60.40.1170">
    <property type="entry name" value="Mu homology domain, subdomain B"/>
    <property type="match status" value="2"/>
</dbReference>
<dbReference type="InterPro" id="IPR050431">
    <property type="entry name" value="Adaptor_comp_med_subunit"/>
</dbReference>
<dbReference type="InterPro" id="IPR036168">
    <property type="entry name" value="AP2_Mu_C_sf"/>
</dbReference>
<dbReference type="InterPro" id="IPR022775">
    <property type="entry name" value="AP_mu_sigma_su"/>
</dbReference>
<dbReference type="InterPro" id="IPR001392">
    <property type="entry name" value="Clathrin_mu"/>
</dbReference>
<dbReference type="InterPro" id="IPR018240">
    <property type="entry name" value="Clathrin_mu_CS"/>
</dbReference>
<dbReference type="InterPro" id="IPR011012">
    <property type="entry name" value="Longin-like_dom_sf"/>
</dbReference>
<dbReference type="InterPro" id="IPR028565">
    <property type="entry name" value="MHD"/>
</dbReference>
<dbReference type="PANTHER" id="PTHR10529">
    <property type="entry name" value="AP COMPLEX SUBUNIT MU"/>
    <property type="match status" value="1"/>
</dbReference>
<dbReference type="Pfam" id="PF00928">
    <property type="entry name" value="Adap_comp_sub"/>
    <property type="match status" value="1"/>
</dbReference>
<dbReference type="Pfam" id="PF01217">
    <property type="entry name" value="Clat_adaptor_s"/>
    <property type="match status" value="1"/>
</dbReference>
<dbReference type="PIRSF" id="PIRSF005992">
    <property type="entry name" value="Clathrin_mu"/>
    <property type="match status" value="1"/>
</dbReference>
<dbReference type="PRINTS" id="PR00314">
    <property type="entry name" value="CLATHRINADPT"/>
</dbReference>
<dbReference type="SUPFAM" id="SSF49447">
    <property type="entry name" value="Second domain of Mu2 adaptin subunit (ap50) of ap2 adaptor"/>
    <property type="match status" value="1"/>
</dbReference>
<dbReference type="SUPFAM" id="SSF64356">
    <property type="entry name" value="SNARE-like"/>
    <property type="match status" value="1"/>
</dbReference>
<dbReference type="PROSITE" id="PS00991">
    <property type="entry name" value="CLAT_ADAPTOR_M_2"/>
    <property type="match status" value="1"/>
</dbReference>
<dbReference type="PROSITE" id="PS51072">
    <property type="entry name" value="MHD"/>
    <property type="match status" value="1"/>
</dbReference>
<gene>
    <name evidence="1" type="primary">AP4M1</name>
</gene>
<reference key="1">
    <citation type="journal article" date="2005" name="Nature">
        <title>Genome sequence, comparative analysis and haplotype structure of the domestic dog.</title>
        <authorList>
            <person name="Lindblad-Toh K."/>
            <person name="Wade C.M."/>
            <person name="Mikkelsen T.S."/>
            <person name="Karlsson E.K."/>
            <person name="Jaffe D.B."/>
            <person name="Kamal M."/>
            <person name="Clamp M."/>
            <person name="Chang J.L."/>
            <person name="Kulbokas E.J. III"/>
            <person name="Zody M.C."/>
            <person name="Mauceli E."/>
            <person name="Xie X."/>
            <person name="Breen M."/>
            <person name="Wayne R.K."/>
            <person name="Ostrander E.A."/>
            <person name="Ponting C.P."/>
            <person name="Galibert F."/>
            <person name="Smith D.R."/>
            <person name="deJong P.J."/>
            <person name="Kirkness E.F."/>
            <person name="Alvarez P."/>
            <person name="Biagi T."/>
            <person name="Brockman W."/>
            <person name="Butler J."/>
            <person name="Chin C.-W."/>
            <person name="Cook A."/>
            <person name="Cuff J."/>
            <person name="Daly M.J."/>
            <person name="DeCaprio D."/>
            <person name="Gnerre S."/>
            <person name="Grabherr M."/>
            <person name="Kellis M."/>
            <person name="Kleber M."/>
            <person name="Bardeleben C."/>
            <person name="Goodstadt L."/>
            <person name="Heger A."/>
            <person name="Hitte C."/>
            <person name="Kim L."/>
            <person name="Koepfli K.-P."/>
            <person name="Parker H.G."/>
            <person name="Pollinger J.P."/>
            <person name="Searle S.M.J."/>
            <person name="Sutter N.B."/>
            <person name="Thomas R."/>
            <person name="Webber C."/>
            <person name="Baldwin J."/>
            <person name="Abebe A."/>
            <person name="Abouelleil A."/>
            <person name="Aftuck L."/>
            <person name="Ait-Zahra M."/>
            <person name="Aldredge T."/>
            <person name="Allen N."/>
            <person name="An P."/>
            <person name="Anderson S."/>
            <person name="Antoine C."/>
            <person name="Arachchi H."/>
            <person name="Aslam A."/>
            <person name="Ayotte L."/>
            <person name="Bachantsang P."/>
            <person name="Barry A."/>
            <person name="Bayul T."/>
            <person name="Benamara M."/>
            <person name="Berlin A."/>
            <person name="Bessette D."/>
            <person name="Blitshteyn B."/>
            <person name="Bloom T."/>
            <person name="Blye J."/>
            <person name="Boguslavskiy L."/>
            <person name="Bonnet C."/>
            <person name="Boukhgalter B."/>
            <person name="Brown A."/>
            <person name="Cahill P."/>
            <person name="Calixte N."/>
            <person name="Camarata J."/>
            <person name="Cheshatsang Y."/>
            <person name="Chu J."/>
            <person name="Citroen M."/>
            <person name="Collymore A."/>
            <person name="Cooke P."/>
            <person name="Dawoe T."/>
            <person name="Daza R."/>
            <person name="Decktor K."/>
            <person name="DeGray S."/>
            <person name="Dhargay N."/>
            <person name="Dooley K."/>
            <person name="Dooley K."/>
            <person name="Dorje P."/>
            <person name="Dorjee K."/>
            <person name="Dorris L."/>
            <person name="Duffey N."/>
            <person name="Dupes A."/>
            <person name="Egbiremolen O."/>
            <person name="Elong R."/>
            <person name="Falk J."/>
            <person name="Farina A."/>
            <person name="Faro S."/>
            <person name="Ferguson D."/>
            <person name="Ferreira P."/>
            <person name="Fisher S."/>
            <person name="FitzGerald M."/>
            <person name="Foley K."/>
            <person name="Foley C."/>
            <person name="Franke A."/>
            <person name="Friedrich D."/>
            <person name="Gage D."/>
            <person name="Garber M."/>
            <person name="Gearin G."/>
            <person name="Giannoukos G."/>
            <person name="Goode T."/>
            <person name="Goyette A."/>
            <person name="Graham J."/>
            <person name="Grandbois E."/>
            <person name="Gyaltsen K."/>
            <person name="Hafez N."/>
            <person name="Hagopian D."/>
            <person name="Hagos B."/>
            <person name="Hall J."/>
            <person name="Healy C."/>
            <person name="Hegarty R."/>
            <person name="Honan T."/>
            <person name="Horn A."/>
            <person name="Houde N."/>
            <person name="Hughes L."/>
            <person name="Hunnicutt L."/>
            <person name="Husby M."/>
            <person name="Jester B."/>
            <person name="Jones C."/>
            <person name="Kamat A."/>
            <person name="Kanga B."/>
            <person name="Kells C."/>
            <person name="Khazanovich D."/>
            <person name="Kieu A.C."/>
            <person name="Kisner P."/>
            <person name="Kumar M."/>
            <person name="Lance K."/>
            <person name="Landers T."/>
            <person name="Lara M."/>
            <person name="Lee W."/>
            <person name="Leger J.-P."/>
            <person name="Lennon N."/>
            <person name="Leuper L."/>
            <person name="LeVine S."/>
            <person name="Liu J."/>
            <person name="Liu X."/>
            <person name="Lokyitsang Y."/>
            <person name="Lokyitsang T."/>
            <person name="Lui A."/>
            <person name="Macdonald J."/>
            <person name="Major J."/>
            <person name="Marabella R."/>
            <person name="Maru K."/>
            <person name="Matthews C."/>
            <person name="McDonough S."/>
            <person name="Mehta T."/>
            <person name="Meldrim J."/>
            <person name="Melnikov A."/>
            <person name="Meneus L."/>
            <person name="Mihalev A."/>
            <person name="Mihova T."/>
            <person name="Miller K."/>
            <person name="Mittelman R."/>
            <person name="Mlenga V."/>
            <person name="Mulrain L."/>
            <person name="Munson G."/>
            <person name="Navidi A."/>
            <person name="Naylor J."/>
            <person name="Nguyen T."/>
            <person name="Nguyen N."/>
            <person name="Nguyen C."/>
            <person name="Nguyen T."/>
            <person name="Nicol R."/>
            <person name="Norbu N."/>
            <person name="Norbu C."/>
            <person name="Novod N."/>
            <person name="Nyima T."/>
            <person name="Olandt P."/>
            <person name="O'Neill B."/>
            <person name="O'Neill K."/>
            <person name="Osman S."/>
            <person name="Oyono L."/>
            <person name="Patti C."/>
            <person name="Perrin D."/>
            <person name="Phunkhang P."/>
            <person name="Pierre F."/>
            <person name="Priest M."/>
            <person name="Rachupka A."/>
            <person name="Raghuraman S."/>
            <person name="Rameau R."/>
            <person name="Ray V."/>
            <person name="Raymond C."/>
            <person name="Rege F."/>
            <person name="Rise C."/>
            <person name="Rogers J."/>
            <person name="Rogov P."/>
            <person name="Sahalie J."/>
            <person name="Settipalli S."/>
            <person name="Sharpe T."/>
            <person name="Shea T."/>
            <person name="Sheehan M."/>
            <person name="Sherpa N."/>
            <person name="Shi J."/>
            <person name="Shih D."/>
            <person name="Sloan J."/>
            <person name="Smith C."/>
            <person name="Sparrow T."/>
            <person name="Stalker J."/>
            <person name="Stange-Thomann N."/>
            <person name="Stavropoulos S."/>
            <person name="Stone C."/>
            <person name="Stone S."/>
            <person name="Sykes S."/>
            <person name="Tchuinga P."/>
            <person name="Tenzing P."/>
            <person name="Tesfaye S."/>
            <person name="Thoulutsang D."/>
            <person name="Thoulutsang Y."/>
            <person name="Topham K."/>
            <person name="Topping I."/>
            <person name="Tsamla T."/>
            <person name="Vassiliev H."/>
            <person name="Venkataraman V."/>
            <person name="Vo A."/>
            <person name="Wangchuk T."/>
            <person name="Wangdi T."/>
            <person name="Weiand M."/>
            <person name="Wilkinson J."/>
            <person name="Wilson A."/>
            <person name="Yadav S."/>
            <person name="Yang S."/>
            <person name="Yang X."/>
            <person name="Young G."/>
            <person name="Yu Q."/>
            <person name="Zainoun J."/>
            <person name="Zembek L."/>
            <person name="Zimmer A."/>
            <person name="Lander E.S."/>
        </authorList>
    </citation>
    <scope>NUCLEOTIDE SEQUENCE [LARGE SCALE GENOMIC DNA]</scope>
    <source>
        <strain>Boxer</strain>
    </source>
</reference>
<reference key="2">
    <citation type="journal article" date="2002" name="Nat. Cell Biol.">
        <title>AP-4 binds basolateral signals and participates in basolateral sorting in epithelial MDCK cells.</title>
        <authorList>
            <person name="Simmen T."/>
            <person name="Hoening S."/>
            <person name="Icking A."/>
            <person name="Tikkanen R."/>
            <person name="Hunziker W."/>
        </authorList>
    </citation>
    <scope>FUNCTION</scope>
    <scope>SUBCELLULAR LOCATION</scope>
</reference>
<organism>
    <name type="scientific">Canis lupus familiaris</name>
    <name type="common">Dog</name>
    <name type="synonym">Canis familiaris</name>
    <dbReference type="NCBI Taxonomy" id="9615"/>
    <lineage>
        <taxon>Eukaryota</taxon>
        <taxon>Metazoa</taxon>
        <taxon>Chordata</taxon>
        <taxon>Craniata</taxon>
        <taxon>Vertebrata</taxon>
        <taxon>Euteleostomi</taxon>
        <taxon>Mammalia</taxon>
        <taxon>Eutheria</taxon>
        <taxon>Laurasiatheria</taxon>
        <taxon>Carnivora</taxon>
        <taxon>Caniformia</taxon>
        <taxon>Canidae</taxon>
        <taxon>Canis</taxon>
    </lineage>
</organism>
<feature type="chain" id="PRO_0000442254" description="AP-4 complex subunit mu-1">
    <location>
        <begin position="1"/>
        <end position="452"/>
    </location>
</feature>
<feature type="domain" description="MHD" evidence="4">
    <location>
        <begin position="184"/>
        <end position="451"/>
    </location>
</feature>
<accession>E2RED8</accession>
<proteinExistence type="inferred from homology"/>
<name>AP4M1_CANLF</name>
<keyword id="KW-0967">Endosome</keyword>
<keyword id="KW-0333">Golgi apparatus</keyword>
<keyword id="KW-0472">Membrane</keyword>
<keyword id="KW-0653">Protein transport</keyword>
<keyword id="KW-1185">Reference proteome</keyword>
<keyword id="KW-0813">Transport</keyword>